<organism>
    <name type="scientific">Homo sapiens</name>
    <name type="common">Human</name>
    <dbReference type="NCBI Taxonomy" id="9606"/>
    <lineage>
        <taxon>Eukaryota</taxon>
        <taxon>Metazoa</taxon>
        <taxon>Chordata</taxon>
        <taxon>Craniata</taxon>
        <taxon>Vertebrata</taxon>
        <taxon>Euteleostomi</taxon>
        <taxon>Mammalia</taxon>
        <taxon>Eutheria</taxon>
        <taxon>Euarchontoglires</taxon>
        <taxon>Primates</taxon>
        <taxon>Haplorrhini</taxon>
        <taxon>Catarrhini</taxon>
        <taxon>Hominidae</taxon>
        <taxon>Homo</taxon>
    </lineage>
</organism>
<accession>Q9HCL2</accession>
<accession>Q5VW51</accession>
<accession>Q86TA3</accession>
<evidence type="ECO:0000250" key="1">
    <source>
        <dbReference type="UniProtKB" id="P97564"/>
    </source>
</evidence>
<evidence type="ECO:0000250" key="2">
    <source>
        <dbReference type="UniProtKB" id="Q61586"/>
    </source>
</evidence>
<evidence type="ECO:0000256" key="3">
    <source>
        <dbReference type="SAM" id="MobiDB-lite"/>
    </source>
</evidence>
<evidence type="ECO:0000269" key="4">
    <source>
    </source>
</evidence>
<evidence type="ECO:0000269" key="5">
    <source>
    </source>
</evidence>
<evidence type="ECO:0000269" key="6">
    <source>
    </source>
</evidence>
<evidence type="ECO:0000303" key="7">
    <source>
    </source>
</evidence>
<evidence type="ECO:0000305" key="8"/>
<evidence type="ECO:0000305" key="9">
    <source>
    </source>
</evidence>
<evidence type="ECO:0000305" key="10">
    <source>
    </source>
</evidence>
<evidence type="ECO:0000312" key="11">
    <source>
        <dbReference type="HGNC" id="HGNC:24865"/>
    </source>
</evidence>
<evidence type="ECO:0007744" key="12">
    <source>
        <dbReference type="PDB" id="8E4Y"/>
    </source>
</evidence>
<evidence type="ECO:0007744" key="13">
    <source>
        <dbReference type="PDB" id="8E50"/>
    </source>
</evidence>
<evidence type="ECO:0007744" key="14">
    <source>
    </source>
</evidence>
<evidence type="ECO:0007744" key="15">
    <source>
    </source>
</evidence>
<evidence type="ECO:0007829" key="16">
    <source>
        <dbReference type="PDB" id="8E4Y"/>
    </source>
</evidence>
<sequence length="828" mass="93795">MDESALTLGTIDVSYLPHSSEYSVGRCKHTSEEWGECGFRPTIFRSATLKWKESLMSRKRPFVGRCCYSCTPQSWDKFFNPSIPSLGLRNVIYINETHTRHRGWLARRLSYVLFIQERDVHKGMFATNVTENVLNSSRVQEAIAEVAAELNPDGSAQQQSKAVNKVKKKAKRILQEMVATVSPAMIRLTGWVLLKLFNSFFWNIQIHKGQLEMVKAATETNLPLLFLPVHRSHIDYLLLTFILFCHNIKAPYIASGNNLNIPIFSTLIHKLGGFFIRRRLDETPDGRKDVLYRALLHGHIVELLRQQQFLEIFLEGTRSRSGKTSCARAGLLSVVVDTLSTNVIPDILIIPVGISYDRIIEGHYNGEQLGKPKKNESLWSVARGVIRMLRKNYGCVRVDFAQPFSLKEYLESQSQKPVSALLSLEQALLPAILPSRPSDAADEGRDTSINESRNATDESLRRRLIANLAEHILFTASKSCAIMSTHIVACLLLYRHRQGIDLSTLVEDFFVMKEEVLARDFDLGFSGNSEDVVMHAIQLLGNCVTITHTSRNDEFFITPSTTVPSVFELNFYSNGVLHVFIMEAIIACSLYAVLNKRGLGGPTSTPPNLISQEQLVRKAASLCYLLSNEGTISLPCQTFYQVCHETVGKFIQYGILTVAEHDDQEDISPSLAEQQWDKKLPEPLSWRSDEEDEDSDFGEEQRDCYLKVSQSKEHQQFITFLQRLLGPLLEAYSSAAIFVHNFSGPVPEPEYLQKLHKYLITRTERNVAVYAESATYCLVKNAVKMFKDIGVFKETKQKRVSVLELSSTFLPQCNRQKLLEYILSFVVL</sequence>
<protein>
    <recommendedName>
        <fullName evidence="8">Glycerol-3-phosphate acyltransferase 1, mitochondrial</fullName>
        <shortName>GPAT-1</shortName>
        <ecNumber evidence="4 6">2.3.1.15</ecNumber>
    </recommendedName>
</protein>
<proteinExistence type="evidence at protein level"/>
<name>GPAT1_HUMAN</name>
<gene>
    <name evidence="11" type="primary">GPAM</name>
    <name evidence="7" type="synonym">GPAT1</name>
    <name type="synonym">KIAA1560</name>
</gene>
<comment type="function">
    <text evidence="4 5 6">Mitochondrial membrane protein that catalyzes the essential first step of biosynthesis of glycerolipids such as triglycerides, phosphatidic acids and lysophosphatidic acids (PubMed:18238778, PubMed:19075029, PubMed:36522428). Esterifies acyl-group from acyl-coenzyme A (acyl-CoA) to the sn-1 position of glycerol-3-phosphate, to produce lysophosphatidic acid (PubMed:18238778). Has a narrow hydrophobic binding cleft that selects for a linear acyl chain (PubMed:36522428). Catalytic activity is higher for substrates with a 16-carbon acyl chain (PubMed:36522428).</text>
</comment>
<comment type="catalytic activity">
    <reaction evidence="4 6">
        <text>sn-glycerol 3-phosphate + an acyl-CoA = a 1-acyl-sn-glycero-3-phosphate + CoA</text>
        <dbReference type="Rhea" id="RHEA:15325"/>
        <dbReference type="ChEBI" id="CHEBI:57287"/>
        <dbReference type="ChEBI" id="CHEBI:57597"/>
        <dbReference type="ChEBI" id="CHEBI:57970"/>
        <dbReference type="ChEBI" id="CHEBI:58342"/>
        <dbReference type="EC" id="2.3.1.15"/>
    </reaction>
    <physiologicalReaction direction="left-to-right" evidence="9 10">
        <dbReference type="Rhea" id="RHEA:15326"/>
    </physiologicalReaction>
</comment>
<comment type="catalytic activity">
    <reaction evidence="4 6">
        <text>(9Z,12Z)-octadecadienoyl-CoA + sn-glycerol 3-phosphate = 1-(9Z,12Z)-octadecadienoyl-sn-glycero-3-phosphate + CoA</text>
        <dbReference type="Rhea" id="RHEA:37203"/>
        <dbReference type="ChEBI" id="CHEBI:57287"/>
        <dbReference type="ChEBI" id="CHEBI:57383"/>
        <dbReference type="ChEBI" id="CHEBI:57597"/>
        <dbReference type="ChEBI" id="CHEBI:74547"/>
    </reaction>
    <physiologicalReaction direction="left-to-right" evidence="9 10">
        <dbReference type="Rhea" id="RHEA:37204"/>
    </physiologicalReaction>
</comment>
<comment type="catalytic activity">
    <reaction evidence="4 6">
        <text>sn-glycerol 3-phosphate + (9Z)-octadecenoyl-CoA = 1-(9Z-octadecenoyl)-sn-glycero-3-phosphate + CoA</text>
        <dbReference type="Rhea" id="RHEA:37199"/>
        <dbReference type="ChEBI" id="CHEBI:57287"/>
        <dbReference type="ChEBI" id="CHEBI:57387"/>
        <dbReference type="ChEBI" id="CHEBI:57597"/>
        <dbReference type="ChEBI" id="CHEBI:74544"/>
    </reaction>
    <physiologicalReaction direction="left-to-right" evidence="9 10">
        <dbReference type="Rhea" id="RHEA:37200"/>
    </physiologicalReaction>
</comment>
<comment type="catalytic activity">
    <reaction evidence="4">
        <text>sn-glycerol 3-phosphate + octadecanoyl-CoA = 1-octadecanoyl-sn-glycero-3-phosphate + CoA</text>
        <dbReference type="Rhea" id="RHEA:37195"/>
        <dbReference type="ChEBI" id="CHEBI:57287"/>
        <dbReference type="ChEBI" id="CHEBI:57394"/>
        <dbReference type="ChEBI" id="CHEBI:57597"/>
        <dbReference type="ChEBI" id="CHEBI:74565"/>
    </reaction>
    <physiologicalReaction direction="left-to-right" evidence="9">
        <dbReference type="Rhea" id="RHEA:37196"/>
    </physiologicalReaction>
</comment>
<comment type="catalytic activity">
    <reaction evidence="4">
        <text>sn-glycerol 3-phosphate + hexadecanoyl-CoA = 1-hexadecanoyl-sn-glycero-3-phosphate + CoA</text>
        <dbReference type="Rhea" id="RHEA:35723"/>
        <dbReference type="ChEBI" id="CHEBI:57287"/>
        <dbReference type="ChEBI" id="CHEBI:57379"/>
        <dbReference type="ChEBI" id="CHEBI:57518"/>
        <dbReference type="ChEBI" id="CHEBI:57597"/>
    </reaction>
    <physiologicalReaction direction="left-to-right" evidence="9">
        <dbReference type="Rhea" id="RHEA:35724"/>
    </physiologicalReaction>
</comment>
<comment type="catalytic activity">
    <reaction evidence="4">
        <text>dodecanoyl-CoA + sn-glycerol 3-phosphate = 1-dodecanoyl-sn-glycerol 3-phosphate + CoA</text>
        <dbReference type="Rhea" id="RHEA:35727"/>
        <dbReference type="ChEBI" id="CHEBI:57287"/>
        <dbReference type="ChEBI" id="CHEBI:57375"/>
        <dbReference type="ChEBI" id="CHEBI:57597"/>
        <dbReference type="ChEBI" id="CHEBI:72682"/>
    </reaction>
    <physiologicalReaction direction="left-to-right" evidence="9">
        <dbReference type="Rhea" id="RHEA:35728"/>
    </physiologicalReaction>
</comment>
<comment type="catalytic activity">
    <reaction evidence="5">
        <text>1-acyl-sn-glycero-3-phospho-(1'-sn-glycerol) + an acyl-CoA = a 1,2-diacyl-sn-glycero-3-phospho-(1'-sn-glycerol) + CoA</text>
        <dbReference type="Rhea" id="RHEA:33203"/>
        <dbReference type="ChEBI" id="CHEBI:57287"/>
        <dbReference type="ChEBI" id="CHEBI:58342"/>
        <dbReference type="ChEBI" id="CHEBI:64716"/>
        <dbReference type="ChEBI" id="CHEBI:64840"/>
    </reaction>
    <physiologicalReaction direction="left-to-right" evidence="5">
        <dbReference type="Rhea" id="RHEA:33204"/>
    </physiologicalReaction>
</comment>
<comment type="pathway">
    <text evidence="4">Phospholipid metabolism; CDP-diacylglycerol biosynthesis; CDP-diacylglycerol from sn-glycerol 3-phosphate: step 1/3.</text>
</comment>
<comment type="interaction">
    <interactant intactId="EBI-7600236">
        <id>Q9HCL2</id>
    </interactant>
    <interactant intactId="EBI-7062247">
        <id>Q9UHD4</id>
        <label>CIDEB</label>
    </interactant>
    <organismsDiffer>false</organismsDiffer>
    <experiments>3</experiments>
</comment>
<comment type="subcellular location">
    <subcellularLocation>
        <location evidence="6">Mitochondrion outer membrane</location>
        <topology evidence="6">Peripheral membrane protein</topology>
    </subcellularLocation>
    <text evidence="6">Associated with the mitochondrion outer membrane of hepatic cells via a patch of basic residues.</text>
</comment>
<comment type="domain">
    <text evidence="6">The HXXXXD motif is essential for acyltransferase activity and contributes to the binding of the cysteamine moiety of the acyl-CoA and the phosphate moiety of the glycerol-3-phosphate.</text>
</comment>
<comment type="similarity">
    <text evidence="8">Belongs to the GPAT/DAPAT family.</text>
</comment>
<keyword id="KW-0002">3D-structure</keyword>
<keyword id="KW-0007">Acetylation</keyword>
<keyword id="KW-0012">Acyltransferase</keyword>
<keyword id="KW-0444">Lipid biosynthesis</keyword>
<keyword id="KW-0443">Lipid metabolism</keyword>
<keyword id="KW-0472">Membrane</keyword>
<keyword id="KW-0496">Mitochondrion</keyword>
<keyword id="KW-1000">Mitochondrion outer membrane</keyword>
<keyword id="KW-0594">Phospholipid biosynthesis</keyword>
<keyword id="KW-1208">Phospholipid metabolism</keyword>
<keyword id="KW-0597">Phosphoprotein</keyword>
<keyword id="KW-1267">Proteomics identification</keyword>
<keyword id="KW-1185">Reference proteome</keyword>
<keyword id="KW-0808">Transferase</keyword>
<reference key="1">
    <citation type="journal article" date="2007" name="BMC Genomics">
        <title>The full-ORF clone resource of the German cDNA consortium.</title>
        <authorList>
            <person name="Bechtel S."/>
            <person name="Rosenfelder H."/>
            <person name="Duda A."/>
            <person name="Schmidt C.P."/>
            <person name="Ernst U."/>
            <person name="Wellenreuther R."/>
            <person name="Mehrle A."/>
            <person name="Schuster C."/>
            <person name="Bahr A."/>
            <person name="Bloecker H."/>
            <person name="Heubner D."/>
            <person name="Hoerlein A."/>
            <person name="Michel G."/>
            <person name="Wedler H."/>
            <person name="Koehrer K."/>
            <person name="Ottenwaelder B."/>
            <person name="Poustka A."/>
            <person name="Wiemann S."/>
            <person name="Schupp I."/>
        </authorList>
    </citation>
    <scope>NUCLEOTIDE SEQUENCE [LARGE SCALE MRNA]</scope>
    <source>
        <tissue>Spinal cord</tissue>
    </source>
</reference>
<reference key="2">
    <citation type="journal article" date="2004" name="Nature">
        <title>The DNA sequence and comparative analysis of human chromosome 10.</title>
        <authorList>
            <person name="Deloukas P."/>
            <person name="Earthrowl M.E."/>
            <person name="Grafham D.V."/>
            <person name="Rubenfield M."/>
            <person name="French L."/>
            <person name="Steward C.A."/>
            <person name="Sims S.K."/>
            <person name="Jones M.C."/>
            <person name="Searle S."/>
            <person name="Scott C."/>
            <person name="Howe K."/>
            <person name="Hunt S.E."/>
            <person name="Andrews T.D."/>
            <person name="Gilbert J.G.R."/>
            <person name="Swarbreck D."/>
            <person name="Ashurst J.L."/>
            <person name="Taylor A."/>
            <person name="Battles J."/>
            <person name="Bird C.P."/>
            <person name="Ainscough R."/>
            <person name="Almeida J.P."/>
            <person name="Ashwell R.I.S."/>
            <person name="Ambrose K.D."/>
            <person name="Babbage A.K."/>
            <person name="Bagguley C.L."/>
            <person name="Bailey J."/>
            <person name="Banerjee R."/>
            <person name="Bates K."/>
            <person name="Beasley H."/>
            <person name="Bray-Allen S."/>
            <person name="Brown A.J."/>
            <person name="Brown J.Y."/>
            <person name="Burford D.C."/>
            <person name="Burrill W."/>
            <person name="Burton J."/>
            <person name="Cahill P."/>
            <person name="Camire D."/>
            <person name="Carter N.P."/>
            <person name="Chapman J.C."/>
            <person name="Clark S.Y."/>
            <person name="Clarke G."/>
            <person name="Clee C.M."/>
            <person name="Clegg S."/>
            <person name="Corby N."/>
            <person name="Coulson A."/>
            <person name="Dhami P."/>
            <person name="Dutta I."/>
            <person name="Dunn M."/>
            <person name="Faulkner L."/>
            <person name="Frankish A."/>
            <person name="Frankland J.A."/>
            <person name="Garner P."/>
            <person name="Garnett J."/>
            <person name="Gribble S."/>
            <person name="Griffiths C."/>
            <person name="Grocock R."/>
            <person name="Gustafson E."/>
            <person name="Hammond S."/>
            <person name="Harley J.L."/>
            <person name="Hart E."/>
            <person name="Heath P.D."/>
            <person name="Ho T.P."/>
            <person name="Hopkins B."/>
            <person name="Horne J."/>
            <person name="Howden P.J."/>
            <person name="Huckle E."/>
            <person name="Hynds C."/>
            <person name="Johnson C."/>
            <person name="Johnson D."/>
            <person name="Kana A."/>
            <person name="Kay M."/>
            <person name="Kimberley A.M."/>
            <person name="Kershaw J.K."/>
            <person name="Kokkinaki M."/>
            <person name="Laird G.K."/>
            <person name="Lawlor S."/>
            <person name="Lee H.M."/>
            <person name="Leongamornlert D.A."/>
            <person name="Laird G."/>
            <person name="Lloyd C."/>
            <person name="Lloyd D.M."/>
            <person name="Loveland J."/>
            <person name="Lovell J."/>
            <person name="McLaren S."/>
            <person name="McLay K.E."/>
            <person name="McMurray A."/>
            <person name="Mashreghi-Mohammadi M."/>
            <person name="Matthews L."/>
            <person name="Milne S."/>
            <person name="Nickerson T."/>
            <person name="Nguyen M."/>
            <person name="Overton-Larty E."/>
            <person name="Palmer S.A."/>
            <person name="Pearce A.V."/>
            <person name="Peck A.I."/>
            <person name="Pelan S."/>
            <person name="Phillimore B."/>
            <person name="Porter K."/>
            <person name="Rice C.M."/>
            <person name="Rogosin A."/>
            <person name="Ross M.T."/>
            <person name="Sarafidou T."/>
            <person name="Sehra H.K."/>
            <person name="Shownkeen R."/>
            <person name="Skuce C.D."/>
            <person name="Smith M."/>
            <person name="Standring L."/>
            <person name="Sycamore N."/>
            <person name="Tester J."/>
            <person name="Thorpe A."/>
            <person name="Torcasso W."/>
            <person name="Tracey A."/>
            <person name="Tromans A."/>
            <person name="Tsolas J."/>
            <person name="Wall M."/>
            <person name="Walsh J."/>
            <person name="Wang H."/>
            <person name="Weinstock K."/>
            <person name="West A.P."/>
            <person name="Willey D.L."/>
            <person name="Whitehead S.L."/>
            <person name="Wilming L."/>
            <person name="Wray P.W."/>
            <person name="Young L."/>
            <person name="Chen Y."/>
            <person name="Lovering R.C."/>
            <person name="Moschonas N.K."/>
            <person name="Siebert R."/>
            <person name="Fechtel K."/>
            <person name="Bentley D."/>
            <person name="Durbin R.M."/>
            <person name="Hubbard T."/>
            <person name="Doucette-Stamm L."/>
            <person name="Beck S."/>
            <person name="Smith D.R."/>
            <person name="Rogers J."/>
        </authorList>
    </citation>
    <scope>NUCLEOTIDE SEQUENCE [LARGE SCALE GENOMIC DNA]</scope>
</reference>
<reference key="3">
    <citation type="journal article" date="2000" name="DNA Res.">
        <title>Prediction of the coding sequences of unidentified human genes. XVIII. The complete sequences of 100 new cDNA clones from brain which code for large proteins in vitro.</title>
        <authorList>
            <person name="Nagase T."/>
            <person name="Kikuno R."/>
            <person name="Nakayama M."/>
            <person name="Hirosawa M."/>
            <person name="Ohara O."/>
        </authorList>
    </citation>
    <scope>NUCLEOTIDE SEQUENCE [LARGE SCALE MRNA] OF 167-828</scope>
    <source>
        <tissue>Brain</tissue>
    </source>
</reference>
<reference key="4">
    <citation type="journal article" date="2006" name="Cell">
        <title>Global, in vivo, and site-specific phosphorylation dynamics in signaling networks.</title>
        <authorList>
            <person name="Olsen J.V."/>
            <person name="Blagoev B."/>
            <person name="Gnad F."/>
            <person name="Macek B."/>
            <person name="Kumar C."/>
            <person name="Mortensen P."/>
            <person name="Mann M."/>
        </authorList>
    </citation>
    <scope>IDENTIFICATION BY MASS SPECTROMETRY [LARGE SCALE ANALYSIS]</scope>
    <source>
        <tissue>Cervix carcinoma</tissue>
    </source>
</reference>
<reference key="5">
    <citation type="journal article" date="2008" name="J. Biol. Chem.">
        <title>AGPAT6 is a novel microsomal glycerol-3-phosphate acyltransferase.</title>
        <authorList>
            <person name="Chen Y.Q."/>
            <person name="Kuo M.-S."/>
            <person name="Li S."/>
            <person name="Bui H.H."/>
            <person name="Peake D.A."/>
            <person name="Sanders P.E."/>
            <person name="Thibodeaux S.J."/>
            <person name="Chu S."/>
            <person name="Qian Y.-W."/>
            <person name="Zhao Y."/>
            <person name="Bredt D.S."/>
            <person name="Moller D.E."/>
            <person name="Konrad R.J."/>
            <person name="Beigneux A.P."/>
            <person name="Young S.G."/>
            <person name="Cao G."/>
        </authorList>
    </citation>
    <scope>FUNCTION</scope>
    <scope>CATALYTIC ACTIVITY</scope>
</reference>
<reference key="6">
    <citation type="journal article" date="2008" name="Proteomics">
        <title>Large-scale phosphoproteome analysis of human liver tissue by enrichment and fractionation of phosphopeptides with strong anion exchange chromatography.</title>
        <authorList>
            <person name="Han G."/>
            <person name="Ye M."/>
            <person name="Zhou H."/>
            <person name="Jiang X."/>
            <person name="Feng S."/>
            <person name="Jiang X."/>
            <person name="Tian R."/>
            <person name="Wan D."/>
            <person name="Zou H."/>
            <person name="Gu J."/>
        </authorList>
    </citation>
    <scope>PHOSPHORYLATION [LARGE SCALE ANALYSIS] AT SER-695</scope>
    <scope>IDENTIFICATION BY MASS SPECTROMETRY [LARGE SCALE ANALYSIS]</scope>
    <source>
        <tissue>Liver</tissue>
    </source>
</reference>
<reference key="7">
    <citation type="journal article" date="2009" name="J. Lipid Res.">
        <title>The microsomal cardiolipin remodeling enzyme acyl-CoA lysocardiolipin acyltransferase is an acyltransferase of multiple anionic lysophospholipids.</title>
        <authorList>
            <person name="Zhao Y."/>
            <person name="Chen Y.-Q."/>
            <person name="Li S."/>
            <person name="Konrad R.J."/>
            <person name="Cao G."/>
        </authorList>
    </citation>
    <scope>FUNCTION</scope>
    <scope>CATALYTIC ACTIVITY</scope>
</reference>
<reference key="8">
    <citation type="journal article" date="2014" name="J. Proteomics">
        <title>An enzyme assisted RP-RPLC approach for in-depth analysis of human liver phosphoproteome.</title>
        <authorList>
            <person name="Bian Y."/>
            <person name="Song C."/>
            <person name="Cheng K."/>
            <person name="Dong M."/>
            <person name="Wang F."/>
            <person name="Huang J."/>
            <person name="Sun D."/>
            <person name="Wang L."/>
            <person name="Ye M."/>
            <person name="Zou H."/>
        </authorList>
    </citation>
    <scope>PHOSPHORYLATION [LARGE SCALE ANALYSIS] AT SER-695</scope>
    <scope>IDENTIFICATION BY MASS SPECTROMETRY [LARGE SCALE ANALYSIS]</scope>
    <source>
        <tissue>Liver</tissue>
    </source>
</reference>
<reference evidence="12 13" key="9">
    <citation type="journal article" date="2023" name="Nat. Struct. Mol. Biol.">
        <title>Structural basis of the acyl-transfer mechanism of human GPAT1.</title>
        <authorList>
            <person name="Johnson Z.L."/>
            <person name="Ammirati M."/>
            <person name="Wasilko D.J."/>
            <person name="Chang J.S."/>
            <person name="Noell S."/>
            <person name="Foley T.L."/>
            <person name="Yoon H."/>
            <person name="Smith K."/>
            <person name="Asano S."/>
            <person name="Hales K."/>
            <person name="Wan M."/>
            <person name="Yang Q."/>
            <person name="Piotrowski M.A."/>
            <person name="Farley K.A."/>
            <person name="Gilbert T."/>
            <person name="Aschenbrenner L.M."/>
            <person name="Fennell K.F."/>
            <person name="Dutra J.K."/>
            <person name="Xu M."/>
            <person name="Guo C."/>
            <person name="Varghese A.E."/>
            <person name="Bellenger J."/>
            <person name="Quinn A."/>
            <person name="Am Ende C.W."/>
            <person name="West G.M."/>
            <person name="Griffor M.C."/>
            <person name="Bennett D."/>
            <person name="Calabrese M."/>
            <person name="Steppan C.M."/>
            <person name="Han S."/>
            <person name="Wu H."/>
        </authorList>
    </citation>
    <scope>STRUCTURE BY ELECTRON MICROSCOPY (3.40 ANGSTROMS) OF 80-828</scope>
    <scope>FUNCTION</scope>
    <scope>CATALYTIC ACTIVITY</scope>
    <scope>ACTIVITY REGULATION</scope>
    <scope>SUBCELLULAR LOCATION</scope>
    <scope>DOMAIN</scope>
    <scope>TOPOLOGY</scope>
    <scope>MUTAGENESIS OF ARG-89; HIS-98; ARG-100; HIS-101; ARG-102; ARG-107; ARG-108; ARG-118; HIS-230; HIS-233; GLY-273; ARG-278; PHE-313; ARG-318 AND MET-388</scope>
</reference>
<feature type="chain" id="PRO_0000024690" description="Glycerol-3-phosphate acyltransferase 1, mitochondrial">
    <location>
        <begin position="1"/>
        <end position="828"/>
    </location>
</feature>
<feature type="topological domain" description="Cytoplasmic" evidence="6 12 13">
    <location>
        <begin position="1"/>
        <end position="87"/>
    </location>
</feature>
<feature type="intramembrane region" evidence="6 12 13">
    <location>
        <begin position="88"/>
        <end position="118"/>
    </location>
</feature>
<feature type="topological domain" description="Cytoplasmic" evidence="6 12 13">
    <location>
        <begin position="119"/>
        <end position="828"/>
    </location>
</feature>
<feature type="region of interest" description="Important for mitochondrial localization">
    <location>
        <begin position="80"/>
        <end position="120"/>
    </location>
</feature>
<feature type="region of interest" description="Disordered" evidence="3">
    <location>
        <begin position="435"/>
        <end position="455"/>
    </location>
</feature>
<feature type="short sequence motif" description="HXXXXD motif" evidence="6">
    <location>
        <begin position="230"/>
        <end position="235"/>
    </location>
</feature>
<feature type="compositionally biased region" description="Basic and acidic residues" evidence="3">
    <location>
        <begin position="442"/>
        <end position="455"/>
    </location>
</feature>
<feature type="binding site" evidence="6 12">
    <location>
        <position position="278"/>
    </location>
    <ligand>
        <name>CoA</name>
        <dbReference type="ChEBI" id="CHEBI:57287"/>
    </ligand>
</feature>
<feature type="binding site" evidence="6 12">
    <location>
        <position position="279"/>
    </location>
    <ligand>
        <name>CoA</name>
        <dbReference type="ChEBI" id="CHEBI:57287"/>
    </ligand>
</feature>
<feature type="binding site" evidence="6 12">
    <location>
        <position position="288"/>
    </location>
    <ligand>
        <name>CoA</name>
        <dbReference type="ChEBI" id="CHEBI:57287"/>
    </ligand>
</feature>
<feature type="binding site" evidence="6 12">
    <location>
        <position position="293"/>
    </location>
    <ligand>
        <name>CoA</name>
        <dbReference type="ChEBI" id="CHEBI:57287"/>
    </ligand>
</feature>
<feature type="binding site" evidence="6 12">
    <location>
        <position position="328"/>
    </location>
    <ligand>
        <name>CoA</name>
        <dbReference type="ChEBI" id="CHEBI:57287"/>
    </ligand>
</feature>
<feature type="binding site" evidence="6 12">
    <location>
        <position position="462"/>
    </location>
    <ligand>
        <name>CoA</name>
        <dbReference type="ChEBI" id="CHEBI:57287"/>
    </ligand>
</feature>
<feature type="modified residue" description="Phosphoserine" evidence="1">
    <location>
        <position position="380"/>
    </location>
</feature>
<feature type="modified residue" description="Phosphoserine" evidence="2">
    <location>
        <position position="688"/>
    </location>
</feature>
<feature type="modified residue" description="Phosphoserine" evidence="14 15">
    <location>
        <position position="695"/>
    </location>
</feature>
<feature type="modified residue" description="N6-acetyllysine" evidence="2">
    <location>
        <position position="780"/>
    </location>
</feature>
<feature type="modified residue" description="N6-acetyllysine" evidence="2">
    <location>
        <position position="784"/>
    </location>
</feature>
<feature type="sequence variant" id="VAR_050585" description="In dbSNP:rs11549703.">
    <original>S</original>
    <variation>Y</variation>
    <location>
        <position position="4"/>
    </location>
</feature>
<feature type="sequence variant" id="VAR_050586" description="In dbSNP:rs2792751.">
    <original>I</original>
    <variation>V</variation>
    <location>
        <position position="43"/>
    </location>
</feature>
<feature type="sequence variant" id="VAR_050587" description="In dbSNP:rs10787428.">
    <original>E</original>
    <variation>G</variation>
    <location>
        <position position="131"/>
    </location>
</feature>
<feature type="sequence variant" id="VAR_050588" description="In dbSNP:rs35019520.">
    <original>I</original>
    <variation>T</variation>
    <location>
        <position position="386"/>
    </location>
</feature>
<feature type="mutagenesis site" description="Abrogates mitochondrial localization; when associated with E-98, E-100, E-101, E-102, E-107, E-108 and E-118." evidence="6">
    <original>R</original>
    <variation>E</variation>
    <location>
        <position position="89"/>
    </location>
</feature>
<feature type="mutagenesis site" description="Abrogates mitochondrial localization; when associated with E-89, E-100, E-101, E-102, E-107, E-108 and E-118." evidence="6">
    <original>H</original>
    <variation>E</variation>
    <location>
        <position position="98"/>
    </location>
</feature>
<feature type="mutagenesis site" description="Abrogates mitochondrial localization; when associated with E-89, E-98, E-101, E-102, E-107, E-108 and E-118." evidence="6">
    <original>R</original>
    <variation>E</variation>
    <location>
        <position position="100"/>
    </location>
</feature>
<feature type="mutagenesis site" description="Abrogates mitochondrial localization; when associated with E-89, E-98, E-100, E-102, E-107, E-108 and E-118." evidence="6">
    <original>H</original>
    <variation>E</variation>
    <location>
        <position position="101"/>
    </location>
</feature>
<feature type="mutagenesis site" description="Abrogates mitochondrial localization; when associated with E-89, E-98, E-100, E-101, E-107, E-108 and E-118." evidence="6">
    <original>R</original>
    <variation>E</variation>
    <location>
        <position position="102"/>
    </location>
</feature>
<feature type="mutagenesis site" description="Abrogates mitochondrial localization; when associated with E-89, E-98, E-100, E-101, E-102, E-108 and E-118." evidence="6">
    <original>R</original>
    <variation>E</variation>
    <location>
        <position position="107"/>
    </location>
</feature>
<feature type="mutagenesis site" description="Abrogates mitochondrial localization; when associated with E-89, E-98, E-100, E-101, E-102, E-107 and E-118." evidence="6">
    <original>R</original>
    <variation>E</variation>
    <location>
        <position position="108"/>
    </location>
</feature>
<feature type="mutagenesis site" description="Abrogates mitochondrial localization; when associated with E-89, E-98, E-100, E-101, E-102, E-107 and E-108." evidence="6">
    <original>R</original>
    <variation>E</variation>
    <location>
        <position position="118"/>
    </location>
</feature>
<feature type="mutagenesis site" description="Abolishes catalytic activity." evidence="6">
    <original>H</original>
    <variation>A</variation>
    <location>
        <position position="230"/>
    </location>
</feature>
<feature type="mutagenesis site" description="Abolishes catalytic activity." evidence="6">
    <original>H</original>
    <variation>W</variation>
    <location>
        <position position="233"/>
    </location>
</feature>
<feature type="mutagenesis site" description="Abolishes catalytic activity." evidence="6">
    <original>G</original>
    <variation>L</variation>
    <location>
        <position position="273"/>
    </location>
</feature>
<feature type="mutagenesis site" description="Abolishes catalytic activity." evidence="6">
    <original>R</original>
    <variation>A</variation>
    <location>
        <position position="278"/>
    </location>
</feature>
<feature type="mutagenesis site" description="Abolishes catalytic activity." evidence="6">
    <original>F</original>
    <variation>A</variation>
    <location>
        <position position="313"/>
    </location>
</feature>
<feature type="mutagenesis site" description="Abolishes catalytic activity." evidence="6">
    <original>R</original>
    <variation>A</variation>
    <location>
        <position position="318"/>
    </location>
</feature>
<feature type="mutagenesis site" description="Impairs catalytic activity." evidence="6">
    <original>M</original>
    <variation>W</variation>
    <location>
        <position position="388"/>
    </location>
</feature>
<feature type="sequence conflict" description="In Ref. 1; CAD89932." evidence="8" ref="1">
    <original>I</original>
    <variation>F</variation>
    <location>
        <position position="204"/>
    </location>
</feature>
<feature type="sequence conflict" description="In Ref. 1; CAD89932." evidence="8" ref="1">
    <original>Q</original>
    <variation>R</variation>
    <location>
        <position position="652"/>
    </location>
</feature>
<feature type="strand" evidence="16">
    <location>
        <begin position="88"/>
        <end position="92"/>
    </location>
</feature>
<feature type="turn" evidence="16">
    <location>
        <begin position="96"/>
        <end position="98"/>
    </location>
</feature>
<feature type="helix" evidence="16">
    <location>
        <begin position="104"/>
        <end position="108"/>
    </location>
</feature>
<feature type="helix" evidence="16">
    <location>
        <begin position="110"/>
        <end position="115"/>
    </location>
</feature>
<feature type="helix" evidence="16">
    <location>
        <begin position="129"/>
        <end position="134"/>
    </location>
</feature>
<feature type="helix" evidence="16">
    <location>
        <begin position="137"/>
        <end position="150"/>
    </location>
</feature>
<feature type="helix" evidence="16">
    <location>
        <begin position="163"/>
        <end position="175"/>
    </location>
</feature>
<feature type="helix" evidence="16">
    <location>
        <begin position="183"/>
        <end position="200"/>
    </location>
</feature>
<feature type="strand" evidence="16">
    <location>
        <begin position="204"/>
        <end position="207"/>
    </location>
</feature>
<feature type="helix" evidence="16">
    <location>
        <begin position="208"/>
        <end position="219"/>
    </location>
</feature>
<feature type="strand" evidence="16">
    <location>
        <begin position="220"/>
        <end position="222"/>
    </location>
</feature>
<feature type="strand" evidence="16">
    <location>
        <begin position="224"/>
        <end position="228"/>
    </location>
</feature>
<feature type="helix" evidence="16">
    <location>
        <begin position="235"/>
        <end position="244"/>
    </location>
</feature>
<feature type="turn" evidence="16">
    <location>
        <begin position="245"/>
        <end position="247"/>
    </location>
</feature>
<feature type="strand" evidence="16">
    <location>
        <begin position="252"/>
        <end position="256"/>
    </location>
</feature>
<feature type="helix" evidence="16">
    <location>
        <begin position="257"/>
        <end position="259"/>
    </location>
</feature>
<feature type="helix" evidence="16">
    <location>
        <begin position="264"/>
        <end position="270"/>
    </location>
</feature>
<feature type="strand" evidence="16">
    <location>
        <begin position="273"/>
        <end position="276"/>
    </location>
</feature>
<feature type="helix" evidence="16">
    <location>
        <begin position="290"/>
        <end position="305"/>
    </location>
</feature>
<feature type="strand" evidence="16">
    <location>
        <begin position="314"/>
        <end position="317"/>
    </location>
</feature>
<feature type="strand" evidence="16">
    <location>
        <begin position="320"/>
        <end position="323"/>
    </location>
</feature>
<feature type="helix" evidence="16">
    <location>
        <begin position="332"/>
        <end position="340"/>
    </location>
</feature>
<feature type="strand" evidence="16">
    <location>
        <begin position="343"/>
        <end position="345"/>
    </location>
</feature>
<feature type="strand" evidence="16">
    <location>
        <begin position="348"/>
        <end position="358"/>
    </location>
</feature>
<feature type="helix" evidence="16">
    <location>
        <begin position="365"/>
        <end position="369"/>
    </location>
</feature>
<feature type="helix" evidence="16">
    <location>
        <begin position="380"/>
        <end position="390"/>
    </location>
</feature>
<feature type="strand" evidence="16">
    <location>
        <begin position="396"/>
        <end position="400"/>
    </location>
</feature>
<feature type="helix" evidence="16">
    <location>
        <begin position="406"/>
        <end position="415"/>
    </location>
</feature>
<feature type="helix" evidence="16">
    <location>
        <begin position="424"/>
        <end position="432"/>
    </location>
</feature>
<feature type="helix" evidence="16">
    <location>
        <begin position="457"/>
        <end position="479"/>
    </location>
</feature>
<feature type="helix" evidence="16">
    <location>
        <begin position="484"/>
        <end position="494"/>
    </location>
</feature>
<feature type="helix" evidence="16">
    <location>
        <begin position="502"/>
        <end position="518"/>
    </location>
</feature>
<feature type="helix" evidence="16">
    <location>
        <begin position="529"/>
        <end position="539"/>
    </location>
</feature>
<feature type="turn" evidence="16">
    <location>
        <begin position="540"/>
        <end position="543"/>
    </location>
</feature>
<feature type="strand" evidence="16">
    <location>
        <begin position="544"/>
        <end position="548"/>
    </location>
</feature>
<feature type="strand" evidence="16">
    <location>
        <begin position="554"/>
        <end position="559"/>
    </location>
</feature>
<feature type="helix" evidence="16">
    <location>
        <begin position="563"/>
        <end position="573"/>
    </location>
</feature>
<feature type="helix" evidence="16">
    <location>
        <begin position="574"/>
        <end position="576"/>
    </location>
</feature>
<feature type="helix" evidence="16">
    <location>
        <begin position="577"/>
        <end position="594"/>
    </location>
</feature>
<feature type="helix" evidence="16">
    <location>
        <begin position="612"/>
        <end position="625"/>
    </location>
</feature>
<feature type="strand" evidence="16">
    <location>
        <begin position="626"/>
        <end position="630"/>
    </location>
</feature>
<feature type="strand" evidence="16">
    <location>
        <begin position="635"/>
        <end position="637"/>
    </location>
</feature>
<feature type="helix" evidence="16">
    <location>
        <begin position="639"/>
        <end position="652"/>
    </location>
</feature>
<feature type="strand" evidence="16">
    <location>
        <begin position="655"/>
        <end position="658"/>
    </location>
</feature>
<feature type="strand" evidence="16">
    <location>
        <begin position="705"/>
        <end position="708"/>
    </location>
</feature>
<feature type="helix" evidence="16">
    <location>
        <begin position="712"/>
        <end position="724"/>
    </location>
</feature>
<feature type="helix" evidence="16">
    <location>
        <begin position="726"/>
        <end position="738"/>
    </location>
</feature>
<feature type="helix" evidence="16">
    <location>
        <begin position="739"/>
        <end position="741"/>
    </location>
</feature>
<feature type="helix" evidence="16">
    <location>
        <begin position="748"/>
        <end position="764"/>
    </location>
</feature>
<feature type="helix" evidence="16">
    <location>
        <begin position="771"/>
        <end position="774"/>
    </location>
</feature>
<feature type="helix" evidence="16">
    <location>
        <begin position="777"/>
        <end position="789"/>
    </location>
</feature>
<feature type="strand" evidence="16">
    <location>
        <begin position="791"/>
        <end position="796"/>
    </location>
</feature>
<feature type="strand" evidence="16">
    <location>
        <begin position="798"/>
        <end position="805"/>
    </location>
</feature>
<feature type="helix" evidence="16">
    <location>
        <begin position="812"/>
        <end position="823"/>
    </location>
</feature>
<dbReference type="EC" id="2.3.1.15" evidence="4 6"/>
<dbReference type="EMBL" id="AL833093">
    <property type="protein sequence ID" value="CAD89932.1"/>
    <property type="molecule type" value="mRNA"/>
</dbReference>
<dbReference type="EMBL" id="AL391986">
    <property type="status" value="NOT_ANNOTATED_CDS"/>
    <property type="molecule type" value="Genomic_DNA"/>
</dbReference>
<dbReference type="EMBL" id="AB046780">
    <property type="protein sequence ID" value="BAB13386.1"/>
    <property type="molecule type" value="mRNA"/>
</dbReference>
<dbReference type="CCDS" id="CCDS7570.1"/>
<dbReference type="RefSeq" id="NP_001231878.1">
    <property type="nucleotide sequence ID" value="NM_001244949.2"/>
</dbReference>
<dbReference type="RefSeq" id="NP_065969.3">
    <property type="nucleotide sequence ID" value="NM_020918.5"/>
</dbReference>
<dbReference type="RefSeq" id="XP_005270055.1">
    <property type="nucleotide sequence ID" value="XM_005269998.2"/>
</dbReference>
<dbReference type="RefSeq" id="XP_024303857.1">
    <property type="nucleotide sequence ID" value="XM_024448089.2"/>
</dbReference>
<dbReference type="RefSeq" id="XP_047281520.1">
    <property type="nucleotide sequence ID" value="XM_047425564.1"/>
</dbReference>
<dbReference type="PDB" id="8E4Y">
    <property type="method" value="EM"/>
    <property type="resolution" value="3.40 A"/>
    <property type="chains" value="A=80-828"/>
</dbReference>
<dbReference type="PDB" id="8E50">
    <property type="method" value="EM"/>
    <property type="resolution" value="3.67 A"/>
    <property type="chains" value="A=80-828"/>
</dbReference>
<dbReference type="PDBsum" id="8E4Y"/>
<dbReference type="PDBsum" id="8E50"/>
<dbReference type="EMDB" id="EMD-27898"/>
<dbReference type="EMDB" id="EMD-27899"/>
<dbReference type="SMR" id="Q9HCL2"/>
<dbReference type="BioGRID" id="121707">
    <property type="interactions" value="36"/>
</dbReference>
<dbReference type="FunCoup" id="Q9HCL2">
    <property type="interactions" value="937"/>
</dbReference>
<dbReference type="IntAct" id="Q9HCL2">
    <property type="interactions" value="17"/>
</dbReference>
<dbReference type="MINT" id="Q9HCL2"/>
<dbReference type="STRING" id="9606.ENSP00000265276"/>
<dbReference type="BindingDB" id="Q9HCL2"/>
<dbReference type="ChEMBL" id="CHEMBL3734642"/>
<dbReference type="SwissLipids" id="SLP:000000094"/>
<dbReference type="GlyGen" id="Q9HCL2">
    <property type="glycosylation" value="2 sites, 1 O-linked glycan (1 site)"/>
</dbReference>
<dbReference type="iPTMnet" id="Q9HCL2"/>
<dbReference type="PhosphoSitePlus" id="Q9HCL2"/>
<dbReference type="SwissPalm" id="Q9HCL2"/>
<dbReference type="BioMuta" id="GPAM"/>
<dbReference type="DMDM" id="59803040"/>
<dbReference type="jPOST" id="Q9HCL2"/>
<dbReference type="MassIVE" id="Q9HCL2"/>
<dbReference type="PaxDb" id="9606-ENSP00000265276"/>
<dbReference type="PeptideAtlas" id="Q9HCL2"/>
<dbReference type="ProteomicsDB" id="81752"/>
<dbReference type="Pumba" id="Q9HCL2"/>
<dbReference type="Antibodypedia" id="31772">
    <property type="antibodies" value="246 antibodies from 30 providers"/>
</dbReference>
<dbReference type="DNASU" id="57678"/>
<dbReference type="Ensembl" id="ENST00000348367.9">
    <property type="protein sequence ID" value="ENSP00000265276.4"/>
    <property type="gene ID" value="ENSG00000119927.14"/>
</dbReference>
<dbReference type="GeneID" id="57678"/>
<dbReference type="KEGG" id="hsa:57678"/>
<dbReference type="MANE-Select" id="ENST00000348367.9">
    <property type="protein sequence ID" value="ENSP00000265276.4"/>
    <property type="RefSeq nucleotide sequence ID" value="NM_001244949.2"/>
    <property type="RefSeq protein sequence ID" value="NP_001231878.1"/>
</dbReference>
<dbReference type="UCSC" id="uc001kzp.4">
    <property type="organism name" value="human"/>
</dbReference>
<dbReference type="AGR" id="HGNC:24865"/>
<dbReference type="CTD" id="57678"/>
<dbReference type="DisGeNET" id="57678"/>
<dbReference type="GeneCards" id="GPAM"/>
<dbReference type="HGNC" id="HGNC:24865">
    <property type="gene designation" value="GPAM"/>
</dbReference>
<dbReference type="HPA" id="ENSG00000119927">
    <property type="expression patterns" value="Tissue enhanced (adipose tissue, liver)"/>
</dbReference>
<dbReference type="MIM" id="602395">
    <property type="type" value="gene"/>
</dbReference>
<dbReference type="neXtProt" id="NX_Q9HCL2"/>
<dbReference type="OpenTargets" id="ENSG00000119927"/>
<dbReference type="PharmGKB" id="PA134983031"/>
<dbReference type="VEuPathDB" id="HostDB:ENSG00000119927"/>
<dbReference type="eggNOG" id="KOG3729">
    <property type="taxonomic scope" value="Eukaryota"/>
</dbReference>
<dbReference type="GeneTree" id="ENSGT00520000055570"/>
<dbReference type="InParanoid" id="Q9HCL2"/>
<dbReference type="OMA" id="RCKHTNE"/>
<dbReference type="OrthoDB" id="5962536at2759"/>
<dbReference type="PAN-GO" id="Q9HCL2">
    <property type="GO annotations" value="6 GO annotations based on evolutionary models"/>
</dbReference>
<dbReference type="PhylomeDB" id="Q9HCL2"/>
<dbReference type="TreeFam" id="TF313360"/>
<dbReference type="BioCyc" id="MetaCyc:57678-MONOMER"/>
<dbReference type="BRENDA" id="2.3.1.15">
    <property type="organism ID" value="2681"/>
</dbReference>
<dbReference type="PathwayCommons" id="Q9HCL2"/>
<dbReference type="Reactome" id="R-HSA-1483166">
    <property type="pathway name" value="Synthesis of PA"/>
</dbReference>
<dbReference type="Reactome" id="R-HSA-2426168">
    <property type="pathway name" value="Activation of gene expression by SREBF (SREBP)"/>
</dbReference>
<dbReference type="Reactome" id="R-HSA-75109">
    <property type="pathway name" value="Triglyceride biosynthesis"/>
</dbReference>
<dbReference type="Reactome" id="R-HSA-8931987">
    <property type="pathway name" value="RUNX1 regulates estrogen receptor mediated transcription"/>
</dbReference>
<dbReference type="Reactome" id="R-HSA-9018519">
    <property type="pathway name" value="Estrogen-dependent gene expression"/>
</dbReference>
<dbReference type="Reactome" id="R-HSA-9841922">
    <property type="pathway name" value="MLL4 and MLL3 complexes regulate expression of PPARG target genes in adipogenesis and hepatic steatosis"/>
</dbReference>
<dbReference type="SignaLink" id="Q9HCL2"/>
<dbReference type="UniPathway" id="UPA00557">
    <property type="reaction ID" value="UER00612"/>
</dbReference>
<dbReference type="BioGRID-ORCS" id="57678">
    <property type="hits" value="11 hits in 1159 CRISPR screens"/>
</dbReference>
<dbReference type="ChiTaRS" id="GPAM">
    <property type="organism name" value="human"/>
</dbReference>
<dbReference type="GeneWiki" id="GPAM"/>
<dbReference type="GenomeRNAi" id="57678"/>
<dbReference type="Pharos" id="Q9HCL2">
    <property type="development level" value="Tbio"/>
</dbReference>
<dbReference type="PRO" id="PR:Q9HCL2"/>
<dbReference type="Proteomes" id="UP000005640">
    <property type="component" value="Chromosome 10"/>
</dbReference>
<dbReference type="RNAct" id="Q9HCL2">
    <property type="molecule type" value="protein"/>
</dbReference>
<dbReference type="Bgee" id="ENSG00000119927">
    <property type="expression patterns" value="Expressed in pericardium and 181 other cell types or tissues"/>
</dbReference>
<dbReference type="ExpressionAtlas" id="Q9HCL2">
    <property type="expression patterns" value="baseline and differential"/>
</dbReference>
<dbReference type="GO" id="GO:0005741">
    <property type="term" value="C:mitochondrial outer membrane"/>
    <property type="evidence" value="ECO:0000304"/>
    <property type="project" value="Reactome"/>
</dbReference>
<dbReference type="GO" id="GO:0005739">
    <property type="term" value="C:mitochondrion"/>
    <property type="evidence" value="ECO:0006056"/>
    <property type="project" value="FlyBase"/>
</dbReference>
<dbReference type="GO" id="GO:0005886">
    <property type="term" value="C:plasma membrane"/>
    <property type="evidence" value="ECO:0007669"/>
    <property type="project" value="InterPro"/>
</dbReference>
<dbReference type="GO" id="GO:0004366">
    <property type="term" value="F:glycerol-3-phosphate O-acyltransferase activity"/>
    <property type="evidence" value="ECO:0000315"/>
    <property type="project" value="UniProtKB"/>
</dbReference>
<dbReference type="GO" id="GO:0050798">
    <property type="term" value="P:activated T cell proliferation"/>
    <property type="evidence" value="ECO:0007669"/>
    <property type="project" value="Ensembl"/>
</dbReference>
<dbReference type="GO" id="GO:0006924">
    <property type="term" value="P:activation-induced cell death of T cells"/>
    <property type="evidence" value="ECO:0007669"/>
    <property type="project" value="Ensembl"/>
</dbReference>
<dbReference type="GO" id="GO:0006637">
    <property type="term" value="P:acyl-CoA metabolic process"/>
    <property type="evidence" value="ECO:0007669"/>
    <property type="project" value="Ensembl"/>
</dbReference>
<dbReference type="GO" id="GO:0016024">
    <property type="term" value="P:CDP-diacylglycerol biosynthetic process"/>
    <property type="evidence" value="ECO:0007669"/>
    <property type="project" value="UniProtKB-UniPathway"/>
</dbReference>
<dbReference type="GO" id="GO:0051607">
    <property type="term" value="P:defense response to virus"/>
    <property type="evidence" value="ECO:0007669"/>
    <property type="project" value="Ensembl"/>
</dbReference>
<dbReference type="GO" id="GO:0006651">
    <property type="term" value="P:diacylglycerol biosynthetic process"/>
    <property type="evidence" value="ECO:0000250"/>
    <property type="project" value="UniProtKB"/>
</dbReference>
<dbReference type="GO" id="GO:0055089">
    <property type="term" value="P:fatty acid homeostasis"/>
    <property type="evidence" value="ECO:0007669"/>
    <property type="project" value="Ensembl"/>
</dbReference>
<dbReference type="GO" id="GO:0006631">
    <property type="term" value="P:fatty acid metabolic process"/>
    <property type="evidence" value="ECO:0007669"/>
    <property type="project" value="Ensembl"/>
</dbReference>
<dbReference type="GO" id="GO:0006650">
    <property type="term" value="P:glycerophospholipid metabolic process"/>
    <property type="evidence" value="ECO:0000318"/>
    <property type="project" value="GO_Central"/>
</dbReference>
<dbReference type="GO" id="GO:0070236">
    <property type="term" value="P:negative regulation of activation-induced cell death of T cells"/>
    <property type="evidence" value="ECO:0007669"/>
    <property type="project" value="Ensembl"/>
</dbReference>
<dbReference type="GO" id="GO:0006654">
    <property type="term" value="P:phosphatidic acid biosynthetic process"/>
    <property type="evidence" value="ECO:0000250"/>
    <property type="project" value="UniProtKB"/>
</dbReference>
<dbReference type="GO" id="GO:0006655">
    <property type="term" value="P:phosphatidylglycerol biosynthetic process"/>
    <property type="evidence" value="ECO:0000315"/>
    <property type="project" value="UniProtKB"/>
</dbReference>
<dbReference type="GO" id="GO:0055091">
    <property type="term" value="P:phospholipid homeostasis"/>
    <property type="evidence" value="ECO:0007669"/>
    <property type="project" value="Ensembl"/>
</dbReference>
<dbReference type="GO" id="GO:0042104">
    <property type="term" value="P:positive regulation of activated T cell proliferation"/>
    <property type="evidence" value="ECO:0007669"/>
    <property type="project" value="Ensembl"/>
</dbReference>
<dbReference type="GO" id="GO:0040018">
    <property type="term" value="P:positive regulation of multicellular organism growth"/>
    <property type="evidence" value="ECO:0007669"/>
    <property type="project" value="Ensembl"/>
</dbReference>
<dbReference type="GO" id="GO:0001817">
    <property type="term" value="P:regulation of cytokine production"/>
    <property type="evidence" value="ECO:0007669"/>
    <property type="project" value="Ensembl"/>
</dbReference>
<dbReference type="GO" id="GO:0009749">
    <property type="term" value="P:response to glucose"/>
    <property type="evidence" value="ECO:0007669"/>
    <property type="project" value="Ensembl"/>
</dbReference>
<dbReference type="GO" id="GO:0019432">
    <property type="term" value="P:triglyceride biosynthetic process"/>
    <property type="evidence" value="ECO:0000314"/>
    <property type="project" value="UniProtKB"/>
</dbReference>
<dbReference type="CDD" id="cd07993">
    <property type="entry name" value="LPLAT_DHAPAT-like"/>
    <property type="match status" value="1"/>
</dbReference>
<dbReference type="InterPro" id="IPR022284">
    <property type="entry name" value="GPAT/DHAPAT"/>
</dbReference>
<dbReference type="InterPro" id="IPR045520">
    <property type="entry name" value="GPAT/DHAPAT_C"/>
</dbReference>
<dbReference type="InterPro" id="IPR041728">
    <property type="entry name" value="GPAT/DHAPAT_LPLAT"/>
</dbReference>
<dbReference type="InterPro" id="IPR028354">
    <property type="entry name" value="GPAT_PlsB"/>
</dbReference>
<dbReference type="InterPro" id="IPR002123">
    <property type="entry name" value="Plipid/glycerol_acylTrfase"/>
</dbReference>
<dbReference type="PANTHER" id="PTHR12563">
    <property type="entry name" value="GLYCEROL-3-PHOSPHATE ACYLTRANSFERASE"/>
    <property type="match status" value="1"/>
</dbReference>
<dbReference type="PANTHER" id="PTHR12563:SF16">
    <property type="entry name" value="GLYCEROL-3-PHOSPHATE ACYLTRANSFERASE 1, MITOCHONDRIAL"/>
    <property type="match status" value="1"/>
</dbReference>
<dbReference type="Pfam" id="PF01553">
    <property type="entry name" value="Acyltransferase"/>
    <property type="match status" value="1"/>
</dbReference>
<dbReference type="Pfam" id="PF19277">
    <property type="entry name" value="GPAT_C"/>
    <property type="match status" value="1"/>
</dbReference>
<dbReference type="PIRSF" id="PIRSF500064">
    <property type="entry name" value="GPAT"/>
    <property type="match status" value="1"/>
</dbReference>
<dbReference type="PIRSF" id="PIRSF000437">
    <property type="entry name" value="GPAT_DHAPAT"/>
    <property type="match status" value="1"/>
</dbReference>
<dbReference type="SMART" id="SM00563">
    <property type="entry name" value="PlsC"/>
    <property type="match status" value="1"/>
</dbReference>
<dbReference type="SUPFAM" id="SSF69593">
    <property type="entry name" value="Glycerol-3-phosphate (1)-acyltransferase"/>
    <property type="match status" value="1"/>
</dbReference>